<gene>
    <name evidence="1" type="primary">truB</name>
    <name type="ordered locus">CE1872</name>
</gene>
<proteinExistence type="inferred from homology"/>
<dbReference type="EC" id="5.4.99.25" evidence="1"/>
<dbReference type="EMBL" id="BA000035">
    <property type="protein sequence ID" value="BAC18682.1"/>
    <property type="status" value="ALT_INIT"/>
    <property type="molecule type" value="Genomic_DNA"/>
</dbReference>
<dbReference type="RefSeq" id="WP_006767872.1">
    <property type="nucleotide sequence ID" value="NC_004369.1"/>
</dbReference>
<dbReference type="SMR" id="Q8FPB3"/>
<dbReference type="STRING" id="196164.gene:10742300"/>
<dbReference type="KEGG" id="cef:CE1872"/>
<dbReference type="eggNOG" id="COG0130">
    <property type="taxonomic scope" value="Bacteria"/>
</dbReference>
<dbReference type="HOGENOM" id="CLU_032087_0_0_11"/>
<dbReference type="OrthoDB" id="9802309at2"/>
<dbReference type="Proteomes" id="UP000001409">
    <property type="component" value="Chromosome"/>
</dbReference>
<dbReference type="GO" id="GO:0003723">
    <property type="term" value="F:RNA binding"/>
    <property type="evidence" value="ECO:0007669"/>
    <property type="project" value="InterPro"/>
</dbReference>
<dbReference type="GO" id="GO:0160148">
    <property type="term" value="F:tRNA pseudouridine(55) synthase activity"/>
    <property type="evidence" value="ECO:0007669"/>
    <property type="project" value="UniProtKB-EC"/>
</dbReference>
<dbReference type="GO" id="GO:1990481">
    <property type="term" value="P:mRNA pseudouridine synthesis"/>
    <property type="evidence" value="ECO:0007669"/>
    <property type="project" value="TreeGrafter"/>
</dbReference>
<dbReference type="GO" id="GO:0031119">
    <property type="term" value="P:tRNA pseudouridine synthesis"/>
    <property type="evidence" value="ECO:0007669"/>
    <property type="project" value="UniProtKB-UniRule"/>
</dbReference>
<dbReference type="CDD" id="cd02573">
    <property type="entry name" value="PseudoU_synth_EcTruB"/>
    <property type="match status" value="1"/>
</dbReference>
<dbReference type="FunFam" id="3.30.2350.10:FF:000011">
    <property type="entry name" value="tRNA pseudouridine synthase B"/>
    <property type="match status" value="1"/>
</dbReference>
<dbReference type="Gene3D" id="3.30.2350.10">
    <property type="entry name" value="Pseudouridine synthase"/>
    <property type="match status" value="1"/>
</dbReference>
<dbReference type="Gene3D" id="2.30.130.10">
    <property type="entry name" value="PUA domain"/>
    <property type="match status" value="1"/>
</dbReference>
<dbReference type="HAMAP" id="MF_01080">
    <property type="entry name" value="TruB_bact"/>
    <property type="match status" value="1"/>
</dbReference>
<dbReference type="InterPro" id="IPR020103">
    <property type="entry name" value="PsdUridine_synth_cat_dom_sf"/>
</dbReference>
<dbReference type="InterPro" id="IPR002501">
    <property type="entry name" value="PsdUridine_synth_N"/>
</dbReference>
<dbReference type="InterPro" id="IPR015947">
    <property type="entry name" value="PUA-like_sf"/>
</dbReference>
<dbReference type="InterPro" id="IPR036974">
    <property type="entry name" value="PUA_sf"/>
</dbReference>
<dbReference type="InterPro" id="IPR015225">
    <property type="entry name" value="tRNA_psdUridine_synth_fam2_C"/>
</dbReference>
<dbReference type="InterPro" id="IPR014780">
    <property type="entry name" value="tRNA_psdUridine_synth_TruB"/>
</dbReference>
<dbReference type="InterPro" id="IPR032819">
    <property type="entry name" value="TruB_C"/>
</dbReference>
<dbReference type="NCBIfam" id="TIGR00431">
    <property type="entry name" value="TruB"/>
    <property type="match status" value="1"/>
</dbReference>
<dbReference type="PANTHER" id="PTHR13767:SF2">
    <property type="entry name" value="PSEUDOURIDYLATE SYNTHASE TRUB1"/>
    <property type="match status" value="1"/>
</dbReference>
<dbReference type="PANTHER" id="PTHR13767">
    <property type="entry name" value="TRNA-PSEUDOURIDINE SYNTHASE"/>
    <property type="match status" value="1"/>
</dbReference>
<dbReference type="Pfam" id="PF09142">
    <property type="entry name" value="TruB_C"/>
    <property type="match status" value="1"/>
</dbReference>
<dbReference type="Pfam" id="PF16198">
    <property type="entry name" value="TruB_C_2"/>
    <property type="match status" value="1"/>
</dbReference>
<dbReference type="Pfam" id="PF01509">
    <property type="entry name" value="TruB_N"/>
    <property type="match status" value="1"/>
</dbReference>
<dbReference type="SUPFAM" id="SSF55120">
    <property type="entry name" value="Pseudouridine synthase"/>
    <property type="match status" value="1"/>
</dbReference>
<dbReference type="SUPFAM" id="SSF88697">
    <property type="entry name" value="PUA domain-like"/>
    <property type="match status" value="1"/>
</dbReference>
<organism>
    <name type="scientific">Corynebacterium efficiens (strain DSM 44549 / YS-314 / AJ 12310 / JCM 11189 / NBRC 100395)</name>
    <dbReference type="NCBI Taxonomy" id="196164"/>
    <lineage>
        <taxon>Bacteria</taxon>
        <taxon>Bacillati</taxon>
        <taxon>Actinomycetota</taxon>
        <taxon>Actinomycetes</taxon>
        <taxon>Mycobacteriales</taxon>
        <taxon>Corynebacteriaceae</taxon>
        <taxon>Corynebacterium</taxon>
    </lineage>
</organism>
<name>TRUB_COREF</name>
<keyword id="KW-0413">Isomerase</keyword>
<keyword id="KW-1185">Reference proteome</keyword>
<keyword id="KW-0819">tRNA processing</keyword>
<feature type="chain" id="PRO_0000121824" description="tRNA pseudouridine synthase B">
    <location>
        <begin position="1"/>
        <end position="297"/>
    </location>
</feature>
<feature type="active site" description="Nucleophile" evidence="1">
    <location>
        <position position="44"/>
    </location>
</feature>
<evidence type="ECO:0000255" key="1">
    <source>
        <dbReference type="HAMAP-Rule" id="MF_01080"/>
    </source>
</evidence>
<evidence type="ECO:0000305" key="2"/>
<accession>Q8FPB3</accession>
<protein>
    <recommendedName>
        <fullName evidence="1">tRNA pseudouridine synthase B</fullName>
        <ecNumber evidence="1">5.4.99.25</ecNumber>
    </recommendedName>
    <alternativeName>
        <fullName evidence="1">tRNA pseudouridine(55) synthase</fullName>
        <shortName evidence="1">Psi55 synthase</shortName>
    </alternativeName>
    <alternativeName>
        <fullName evidence="1">tRNA pseudouridylate synthase</fullName>
    </alternativeName>
    <alternativeName>
        <fullName evidence="1">tRNA-uridine isomerase</fullName>
    </alternativeName>
</protein>
<comment type="function">
    <text evidence="1">Responsible for synthesis of pseudouridine from uracil-55 in the psi GC loop of transfer RNAs.</text>
</comment>
<comment type="catalytic activity">
    <reaction evidence="1">
        <text>uridine(55) in tRNA = pseudouridine(55) in tRNA</text>
        <dbReference type="Rhea" id="RHEA:42532"/>
        <dbReference type="Rhea" id="RHEA-COMP:10101"/>
        <dbReference type="Rhea" id="RHEA-COMP:10102"/>
        <dbReference type="ChEBI" id="CHEBI:65314"/>
        <dbReference type="ChEBI" id="CHEBI:65315"/>
        <dbReference type="EC" id="5.4.99.25"/>
    </reaction>
</comment>
<comment type="similarity">
    <text evidence="1">Belongs to the pseudouridine synthase TruB family. Type 1 subfamily.</text>
</comment>
<comment type="sequence caution" evidence="2">
    <conflict type="erroneous initiation">
        <sequence resource="EMBL-CDS" id="BAC18682"/>
    </conflict>
</comment>
<sequence>MNDPVQNSGLVVVDKPAGMTSHDVVSKLRRAFSTRKVGHAGTLDPMATGVLVVGIERGTRFLAHLVATTKAYDATIRLGASTTTDDREGDVVFSADASTLDDEQITTAVTSLTGEIMQKPASVSAIKIDGKRAHERVRDGEVVDIPARPVTVSVFDVLEQRREGGFVDLDVRVHCSSGTYIRSLARDLGAALGVGGHLTALRRTEVGPFTLEDAIPLADLQDNARLSLSLDEALARSYPVLEITEAEGEALSMGKWLEPRGLKGVHAAVTPSGRSIALVEEKGKRLATVFVARPNTL</sequence>
<reference key="1">
    <citation type="journal article" date="2003" name="Genome Res.">
        <title>Comparative complete genome sequence analysis of the amino acid replacements responsible for the thermostability of Corynebacterium efficiens.</title>
        <authorList>
            <person name="Nishio Y."/>
            <person name="Nakamura Y."/>
            <person name="Kawarabayasi Y."/>
            <person name="Usuda Y."/>
            <person name="Kimura E."/>
            <person name="Sugimoto S."/>
            <person name="Matsui K."/>
            <person name="Yamagishi A."/>
            <person name="Kikuchi H."/>
            <person name="Ikeo K."/>
            <person name="Gojobori T."/>
        </authorList>
    </citation>
    <scope>NUCLEOTIDE SEQUENCE [LARGE SCALE GENOMIC DNA]</scope>
    <source>
        <strain>DSM 44549 / YS-314 / AJ 12310 / JCM 11189 / NBRC 100395</strain>
    </source>
</reference>